<dbReference type="EC" id="3.4.21.-"/>
<dbReference type="EMBL" id="DS995702">
    <property type="protein sequence ID" value="EEQ29251.1"/>
    <property type="molecule type" value="Genomic_DNA"/>
</dbReference>
<dbReference type="RefSeq" id="XP_002849136.1">
    <property type="nucleotide sequence ID" value="XM_002849090.1"/>
</dbReference>
<dbReference type="SMR" id="C5FII2"/>
<dbReference type="STRING" id="554155.C5FII2"/>
<dbReference type="GlyCosmos" id="C5FII2">
    <property type="glycosylation" value="2 sites, No reported glycans"/>
</dbReference>
<dbReference type="GeneID" id="9229190"/>
<dbReference type="VEuPathDB" id="FungiDB:MCYG_02070"/>
<dbReference type="eggNOG" id="KOG1153">
    <property type="taxonomic scope" value="Eukaryota"/>
</dbReference>
<dbReference type="HOGENOM" id="CLU_011263_1_4_1"/>
<dbReference type="OMA" id="RHPDVDY"/>
<dbReference type="OrthoDB" id="206201at2759"/>
<dbReference type="Proteomes" id="UP000002035">
    <property type="component" value="Unassembled WGS sequence"/>
</dbReference>
<dbReference type="GO" id="GO:0005576">
    <property type="term" value="C:extracellular region"/>
    <property type="evidence" value="ECO:0007669"/>
    <property type="project" value="UniProtKB-SubCell"/>
</dbReference>
<dbReference type="GO" id="GO:0005773">
    <property type="term" value="C:vacuole"/>
    <property type="evidence" value="ECO:0007669"/>
    <property type="project" value="GOC"/>
</dbReference>
<dbReference type="GO" id="GO:0004252">
    <property type="term" value="F:serine-type endopeptidase activity"/>
    <property type="evidence" value="ECO:0007669"/>
    <property type="project" value="EnsemblFungi"/>
</dbReference>
<dbReference type="GO" id="GO:0000425">
    <property type="term" value="P:pexophagy"/>
    <property type="evidence" value="ECO:0007669"/>
    <property type="project" value="EnsemblFungi"/>
</dbReference>
<dbReference type="GO" id="GO:0007039">
    <property type="term" value="P:protein catabolic process in the vacuole"/>
    <property type="evidence" value="ECO:0007669"/>
    <property type="project" value="EnsemblFungi"/>
</dbReference>
<dbReference type="GO" id="GO:0006508">
    <property type="term" value="P:proteolysis"/>
    <property type="evidence" value="ECO:0007669"/>
    <property type="project" value="UniProtKB-KW"/>
</dbReference>
<dbReference type="GO" id="GO:0030435">
    <property type="term" value="P:sporulation resulting in formation of a cellular spore"/>
    <property type="evidence" value="ECO:0007669"/>
    <property type="project" value="EnsemblFungi"/>
</dbReference>
<dbReference type="CDD" id="cd04077">
    <property type="entry name" value="Peptidases_S8_PCSK9_ProteinaseK_like"/>
    <property type="match status" value="1"/>
</dbReference>
<dbReference type="FunFam" id="3.30.70.80:FF:000006">
    <property type="entry name" value="Autophagic serine protease Alp2"/>
    <property type="match status" value="1"/>
</dbReference>
<dbReference type="FunFam" id="3.40.50.200:FF:000007">
    <property type="entry name" value="Subtilisin-like serine protease"/>
    <property type="match status" value="1"/>
</dbReference>
<dbReference type="Gene3D" id="3.30.70.80">
    <property type="entry name" value="Peptidase S8 propeptide/proteinase inhibitor I9"/>
    <property type="match status" value="1"/>
</dbReference>
<dbReference type="Gene3D" id="3.40.50.200">
    <property type="entry name" value="Peptidase S8/S53 domain"/>
    <property type="match status" value="1"/>
</dbReference>
<dbReference type="InterPro" id="IPR034193">
    <property type="entry name" value="PCSK9_ProteinaseK-like"/>
</dbReference>
<dbReference type="InterPro" id="IPR000209">
    <property type="entry name" value="Peptidase_S8/S53_dom"/>
</dbReference>
<dbReference type="InterPro" id="IPR036852">
    <property type="entry name" value="Peptidase_S8/S53_dom_sf"/>
</dbReference>
<dbReference type="InterPro" id="IPR022398">
    <property type="entry name" value="Peptidase_S8_His-AS"/>
</dbReference>
<dbReference type="InterPro" id="IPR023828">
    <property type="entry name" value="Peptidase_S8_Ser-AS"/>
</dbReference>
<dbReference type="InterPro" id="IPR050131">
    <property type="entry name" value="Peptidase_S8_subtilisin-like"/>
</dbReference>
<dbReference type="InterPro" id="IPR015500">
    <property type="entry name" value="Peptidase_S8_subtilisin-rel"/>
</dbReference>
<dbReference type="InterPro" id="IPR010259">
    <property type="entry name" value="S8pro/Inhibitor_I9"/>
</dbReference>
<dbReference type="InterPro" id="IPR037045">
    <property type="entry name" value="S8pro/Inhibitor_I9_sf"/>
</dbReference>
<dbReference type="PANTHER" id="PTHR43806:SF11">
    <property type="entry name" value="CEREVISIN-RELATED"/>
    <property type="match status" value="1"/>
</dbReference>
<dbReference type="PANTHER" id="PTHR43806">
    <property type="entry name" value="PEPTIDASE S8"/>
    <property type="match status" value="1"/>
</dbReference>
<dbReference type="Pfam" id="PF05922">
    <property type="entry name" value="Inhibitor_I9"/>
    <property type="match status" value="1"/>
</dbReference>
<dbReference type="Pfam" id="PF00082">
    <property type="entry name" value="Peptidase_S8"/>
    <property type="match status" value="1"/>
</dbReference>
<dbReference type="PRINTS" id="PR00723">
    <property type="entry name" value="SUBTILISIN"/>
</dbReference>
<dbReference type="SUPFAM" id="SSF52743">
    <property type="entry name" value="Subtilisin-like"/>
    <property type="match status" value="1"/>
</dbReference>
<dbReference type="PROSITE" id="PS51892">
    <property type="entry name" value="SUBTILASE"/>
    <property type="match status" value="1"/>
</dbReference>
<dbReference type="PROSITE" id="PS00137">
    <property type="entry name" value="SUBTILASE_HIS"/>
    <property type="match status" value="1"/>
</dbReference>
<dbReference type="PROSITE" id="PS00138">
    <property type="entry name" value="SUBTILASE_SER"/>
    <property type="match status" value="1"/>
</dbReference>
<comment type="function">
    <text evidence="1">Secreted subtilisin-like serine protease with keratinolytic activity that contributes to pathogenicity.</text>
</comment>
<comment type="subcellular location">
    <subcellularLocation>
        <location evidence="1">Secreted</location>
    </subcellularLocation>
</comment>
<comment type="similarity">
    <text evidence="4">Belongs to the peptidase S8 family.</text>
</comment>
<proteinExistence type="inferred from homology"/>
<keyword id="KW-0325">Glycoprotein</keyword>
<keyword id="KW-0378">Hydrolase</keyword>
<keyword id="KW-0645">Protease</keyword>
<keyword id="KW-1185">Reference proteome</keyword>
<keyword id="KW-0964">Secreted</keyword>
<keyword id="KW-0720">Serine protease</keyword>
<keyword id="KW-0732">Signal</keyword>
<keyword id="KW-0843">Virulence</keyword>
<keyword id="KW-0865">Zymogen</keyword>
<gene>
    <name type="primary">SUB8</name>
    <name type="ORF">MCYG_02070</name>
</gene>
<evidence type="ECO:0000250" key="1"/>
<evidence type="ECO:0000255" key="2"/>
<evidence type="ECO:0000255" key="3">
    <source>
        <dbReference type="PROSITE-ProRule" id="PRU01240"/>
    </source>
</evidence>
<evidence type="ECO:0000305" key="4"/>
<sequence length="490" mass="52480">MKGLLSLSVLPVLAYASPMIVDSIHQDAAPILSSTNAKDIPDSYIVVFKKGVSSSSALAHQTWVQEIHTSTESKRLKKRNQFTFKNEAFDGLKHTFDIAGGLLGYSGHFDEEVIEQVRRHPDVEYIERDSEVRALESVTENGAPWGLARISHRKRLNFGTFNKYIYAAQGGEGVDAYVIDTGTNIEHVDFEGRASWGKTIPENDDDIDGNGHGTHCSGTIAGKKYGVAKKAHVHAVKVLRTSGSGTMSDVVKGVQWAAESHLKQVGETKKGNRKGFKGSVANMSLGGGKSVTLDRVVDQAVAVGMHFAVAAGNDNADACNYSPAASQNSITVGASTLTDERAYFSNYGKCTDIFAPGLNIQSTWIGSKYAVNTISGTSMASPHICGLLAYFLSLQPASDSAFAVAEITPAEMKENMISIASKNALTDIPADTPNLLAWNGGGSDNYKEIVGGKDNATKEHISSTLTEKLEQLAEEGLTAIYNELKDVVVA</sequence>
<organism>
    <name type="scientific">Arthroderma otae (strain ATCC MYA-4605 / CBS 113480)</name>
    <name type="common">Microsporum canis</name>
    <dbReference type="NCBI Taxonomy" id="554155"/>
    <lineage>
        <taxon>Eukaryota</taxon>
        <taxon>Fungi</taxon>
        <taxon>Dikarya</taxon>
        <taxon>Ascomycota</taxon>
        <taxon>Pezizomycotina</taxon>
        <taxon>Eurotiomycetes</taxon>
        <taxon>Eurotiomycetidae</taxon>
        <taxon>Onygenales</taxon>
        <taxon>Arthrodermataceae</taxon>
        <taxon>Microsporum</taxon>
    </lineage>
</organism>
<accession>C5FII2</accession>
<name>SUB8_ARTOC</name>
<reference key="1">
    <citation type="journal article" date="2012" name="MBio">
        <title>Comparative genome analysis of Trichophyton rubrum and related dermatophytes reveals candidate genes involved in infection.</title>
        <authorList>
            <person name="Martinez D.A."/>
            <person name="Oliver B.G."/>
            <person name="Graeser Y."/>
            <person name="Goldberg J.M."/>
            <person name="Li W."/>
            <person name="Martinez-Rossi N.M."/>
            <person name="Monod M."/>
            <person name="Shelest E."/>
            <person name="Barton R.C."/>
            <person name="Birch E."/>
            <person name="Brakhage A.A."/>
            <person name="Chen Z."/>
            <person name="Gurr S.J."/>
            <person name="Heiman D."/>
            <person name="Heitman J."/>
            <person name="Kosti I."/>
            <person name="Rossi A."/>
            <person name="Saif S."/>
            <person name="Samalova M."/>
            <person name="Saunders C.W."/>
            <person name="Shea T."/>
            <person name="Summerbell R.C."/>
            <person name="Xu J."/>
            <person name="Young S."/>
            <person name="Zeng Q."/>
            <person name="Birren B.W."/>
            <person name="Cuomo C.A."/>
            <person name="White T.C."/>
        </authorList>
    </citation>
    <scope>NUCLEOTIDE SEQUENCE [LARGE SCALE GENOMIC DNA]</scope>
    <source>
        <strain>ATCC MYA-4605 / CBS 113480</strain>
    </source>
</reference>
<protein>
    <recommendedName>
        <fullName>Subtilisin-like protease 8</fullName>
        <ecNumber>3.4.21.-</ecNumber>
    </recommendedName>
</protein>
<feature type="signal peptide" evidence="2">
    <location>
        <begin position="1"/>
        <end position="26"/>
    </location>
</feature>
<feature type="propeptide" id="PRO_0000406380" evidence="1">
    <location>
        <begin position="27"/>
        <end position="134"/>
    </location>
</feature>
<feature type="chain" id="PRO_0000406381" description="Subtilisin-like protease 8">
    <location>
        <begin position="135"/>
        <end position="490"/>
    </location>
</feature>
<feature type="domain" description="Inhibitor I9" evidence="2">
    <location>
        <begin position="43"/>
        <end position="133"/>
    </location>
</feature>
<feature type="domain" description="Peptidase S8" evidence="3">
    <location>
        <begin position="144"/>
        <end position="450"/>
    </location>
</feature>
<feature type="active site" description="Charge relay system" evidence="3">
    <location>
        <position position="180"/>
    </location>
</feature>
<feature type="active site" description="Charge relay system" evidence="3">
    <location>
        <position position="212"/>
    </location>
</feature>
<feature type="active site" description="Charge relay system" evidence="3">
    <location>
        <position position="378"/>
    </location>
</feature>
<feature type="glycosylation site" description="N-linked (GlcNAc...) asparagine" evidence="2">
    <location>
        <position position="282"/>
    </location>
</feature>
<feature type="glycosylation site" description="N-linked (GlcNAc...) asparagine" evidence="2">
    <location>
        <position position="455"/>
    </location>
</feature>